<reference key="1">
    <citation type="submission" date="2008-08" db="EMBL/GenBank/DDBJ databases">
        <title>The complete genome sequence of Coprothermobacter proteolyticus strain ATCC 5245 / DSM 5265 / BT.</title>
        <authorList>
            <person name="Dodson R.J."/>
            <person name="Durkin A.S."/>
            <person name="Wu M."/>
            <person name="Eisen J."/>
            <person name="Sutton G."/>
        </authorList>
    </citation>
    <scope>NUCLEOTIDE SEQUENCE [LARGE SCALE GENOMIC DNA]</scope>
    <source>
        <strain>ATCC 35245 / DSM 5265 / OCM 4 / BT</strain>
    </source>
</reference>
<feature type="chain" id="PRO_1000114513" description="Glycine cleavage system H protein">
    <location>
        <begin position="1"/>
        <end position="127"/>
    </location>
</feature>
<feature type="domain" description="Lipoyl-binding" evidence="2">
    <location>
        <begin position="23"/>
        <end position="105"/>
    </location>
</feature>
<feature type="modified residue" description="N6-lipoyllysine" evidence="1">
    <location>
        <position position="64"/>
    </location>
</feature>
<accession>B5Y8S2</accession>
<keyword id="KW-0450">Lipoyl</keyword>
<keyword id="KW-1185">Reference proteome</keyword>
<dbReference type="EMBL" id="CP001145">
    <property type="protein sequence ID" value="ACI17797.1"/>
    <property type="molecule type" value="Genomic_DNA"/>
</dbReference>
<dbReference type="RefSeq" id="WP_012544449.1">
    <property type="nucleotide sequence ID" value="NC_011295.1"/>
</dbReference>
<dbReference type="SMR" id="B5Y8S2"/>
<dbReference type="STRING" id="309798.COPRO5265_0831"/>
<dbReference type="KEGG" id="cpo:COPRO5265_0831"/>
<dbReference type="eggNOG" id="COG0509">
    <property type="taxonomic scope" value="Bacteria"/>
</dbReference>
<dbReference type="HOGENOM" id="CLU_097408_2_0_9"/>
<dbReference type="OrthoDB" id="9796712at2"/>
<dbReference type="Proteomes" id="UP000001732">
    <property type="component" value="Chromosome"/>
</dbReference>
<dbReference type="GO" id="GO:0005829">
    <property type="term" value="C:cytosol"/>
    <property type="evidence" value="ECO:0007669"/>
    <property type="project" value="TreeGrafter"/>
</dbReference>
<dbReference type="GO" id="GO:0005960">
    <property type="term" value="C:glycine cleavage complex"/>
    <property type="evidence" value="ECO:0007669"/>
    <property type="project" value="InterPro"/>
</dbReference>
<dbReference type="GO" id="GO:0019464">
    <property type="term" value="P:glycine decarboxylation via glycine cleavage system"/>
    <property type="evidence" value="ECO:0007669"/>
    <property type="project" value="UniProtKB-UniRule"/>
</dbReference>
<dbReference type="CDD" id="cd06848">
    <property type="entry name" value="GCS_H"/>
    <property type="match status" value="1"/>
</dbReference>
<dbReference type="Gene3D" id="2.40.50.100">
    <property type="match status" value="1"/>
</dbReference>
<dbReference type="HAMAP" id="MF_00272">
    <property type="entry name" value="GcvH"/>
    <property type="match status" value="1"/>
</dbReference>
<dbReference type="InterPro" id="IPR003016">
    <property type="entry name" value="2-oxoA_DH_lipoyl-BS"/>
</dbReference>
<dbReference type="InterPro" id="IPR000089">
    <property type="entry name" value="Biotin_lipoyl"/>
</dbReference>
<dbReference type="InterPro" id="IPR002930">
    <property type="entry name" value="GCV_H"/>
</dbReference>
<dbReference type="InterPro" id="IPR033753">
    <property type="entry name" value="GCV_H/Fam206"/>
</dbReference>
<dbReference type="InterPro" id="IPR017453">
    <property type="entry name" value="GCV_H_sub"/>
</dbReference>
<dbReference type="InterPro" id="IPR011053">
    <property type="entry name" value="Single_hybrid_motif"/>
</dbReference>
<dbReference type="NCBIfam" id="TIGR00527">
    <property type="entry name" value="gcvH"/>
    <property type="match status" value="1"/>
</dbReference>
<dbReference type="NCBIfam" id="NF002270">
    <property type="entry name" value="PRK01202.1"/>
    <property type="match status" value="1"/>
</dbReference>
<dbReference type="PANTHER" id="PTHR11715">
    <property type="entry name" value="GLYCINE CLEAVAGE SYSTEM H PROTEIN"/>
    <property type="match status" value="1"/>
</dbReference>
<dbReference type="PANTHER" id="PTHR11715:SF3">
    <property type="entry name" value="GLYCINE CLEAVAGE SYSTEM H PROTEIN-RELATED"/>
    <property type="match status" value="1"/>
</dbReference>
<dbReference type="Pfam" id="PF01597">
    <property type="entry name" value="GCV_H"/>
    <property type="match status" value="1"/>
</dbReference>
<dbReference type="SUPFAM" id="SSF51230">
    <property type="entry name" value="Single hybrid motif"/>
    <property type="match status" value="1"/>
</dbReference>
<dbReference type="PROSITE" id="PS50968">
    <property type="entry name" value="BIOTINYL_LIPOYL"/>
    <property type="match status" value="1"/>
</dbReference>
<dbReference type="PROSITE" id="PS00189">
    <property type="entry name" value="LIPOYL"/>
    <property type="match status" value="1"/>
</dbReference>
<proteinExistence type="inferred from homology"/>
<comment type="function">
    <text evidence="1">The glycine cleavage system catalyzes the degradation of glycine. The H protein shuttles the methylamine group of glycine from the P protein to the T protein.</text>
</comment>
<comment type="cofactor">
    <cofactor evidence="1">
        <name>(R)-lipoate</name>
        <dbReference type="ChEBI" id="CHEBI:83088"/>
    </cofactor>
    <text evidence="1">Binds 1 lipoyl cofactor covalently.</text>
</comment>
<comment type="subunit">
    <text evidence="1">The glycine cleavage system is composed of four proteins: P, T, L and H.</text>
</comment>
<comment type="similarity">
    <text evidence="1">Belongs to the GcvH family.</text>
</comment>
<gene>
    <name evidence="1" type="primary">gcvH</name>
    <name type="ordered locus">COPRO5265_0831</name>
</gene>
<organism>
    <name type="scientific">Coprothermobacter proteolyticus (strain ATCC 35245 / DSM 5265 / OCM 4 / BT)</name>
    <dbReference type="NCBI Taxonomy" id="309798"/>
    <lineage>
        <taxon>Bacteria</taxon>
        <taxon>Pseudomonadati</taxon>
        <taxon>Coprothermobacterota</taxon>
        <taxon>Coprothermobacteria</taxon>
        <taxon>Coprothermobacterales</taxon>
        <taxon>Coprothermobacteraceae</taxon>
        <taxon>Coprothermobacter</taxon>
    </lineage>
</organism>
<protein>
    <recommendedName>
        <fullName evidence="1">Glycine cleavage system H protein</fullName>
    </recommendedName>
</protein>
<name>GCSH_COPPD</name>
<sequence>MKVLEGLKYSKEHEWVKVLEDNKVSVGITDFAQDELGDIVFVNLPAVGQEIKVGETLASLESVKSASDVYSPVSGKVVEVNEKLKNSPEIINDDPYGEGWIAVIELSDVSVLDTLMSAEEYKQFIGE</sequence>
<evidence type="ECO:0000255" key="1">
    <source>
        <dbReference type="HAMAP-Rule" id="MF_00272"/>
    </source>
</evidence>
<evidence type="ECO:0000255" key="2">
    <source>
        <dbReference type="PROSITE-ProRule" id="PRU01066"/>
    </source>
</evidence>